<comment type="catalytic activity">
    <reaction>
        <text>Hydrolysis of terminal non-reducing beta-D-galactose residues in beta-D-galactosides.</text>
        <dbReference type="EC" id="3.2.1.23"/>
    </reaction>
</comment>
<comment type="subcellular location">
    <subcellularLocation>
        <location evidence="5">Secreted</location>
        <location evidence="5">Extracellular space</location>
        <location evidence="5">Apoplast</location>
    </subcellularLocation>
</comment>
<comment type="alternative products">
    <event type="alternative splicing"/>
    <isoform>
        <id>Q9SCV3-1</id>
        <name>1</name>
        <sequence type="displayed"/>
    </isoform>
    <text>A number of isoforms are produced. According to EST sequences.</text>
</comment>
<comment type="tissue specificity">
    <text evidence="3 4">Ubiquitous, with higher expression levels in siliques.</text>
</comment>
<comment type="similarity">
    <text evidence="5">Belongs to the glycosyl hydrolase 35 family.</text>
</comment>
<feature type="signal peptide" evidence="1">
    <location>
        <begin position="1"/>
        <end position="30"/>
    </location>
</feature>
<feature type="chain" id="PRO_5000065883" description="Beta-galactosidase 9">
    <location>
        <begin position="31"/>
        <end position="887"/>
    </location>
</feature>
<feature type="domain" description="SUEL-type lectin" evidence="2">
    <location>
        <begin position="791"/>
        <end position="877"/>
    </location>
</feature>
<feature type="active site" description="Proton donor" evidence="1">
    <location>
        <position position="194"/>
    </location>
</feature>
<feature type="active site" description="Nucleophile" evidence="1">
    <location>
        <position position="263"/>
    </location>
</feature>
<feature type="glycosylation site" description="N-linked (GlcNAc...) asparagine" evidence="1">
    <location>
        <position position="37"/>
    </location>
</feature>
<feature type="glycosylation site" description="N-linked (GlcNAc...) asparagine" evidence="1">
    <location>
        <position position="463"/>
    </location>
</feature>
<feature type="glycosylation site" description="N-linked (GlcNAc...) asparagine" evidence="1">
    <location>
        <position position="485"/>
    </location>
</feature>
<feature type="glycosylation site" description="N-linked (GlcNAc...) asparagine" evidence="1">
    <location>
        <position position="496"/>
    </location>
</feature>
<feature type="glycosylation site" description="N-linked (GlcNAc...) asparagine" evidence="1">
    <location>
        <position position="527"/>
    </location>
</feature>
<feature type="glycosylation site" description="N-linked (GlcNAc...) asparagine" evidence="1">
    <location>
        <position position="785"/>
    </location>
</feature>
<feature type="glycosylation site" description="N-linked (GlcNAc...) asparagine" evidence="1">
    <location>
        <position position="881"/>
    </location>
</feature>
<organism>
    <name type="scientific">Arabidopsis thaliana</name>
    <name type="common">Mouse-ear cress</name>
    <dbReference type="NCBI Taxonomy" id="3702"/>
    <lineage>
        <taxon>Eukaryota</taxon>
        <taxon>Viridiplantae</taxon>
        <taxon>Streptophyta</taxon>
        <taxon>Embryophyta</taxon>
        <taxon>Tracheophyta</taxon>
        <taxon>Spermatophyta</taxon>
        <taxon>Magnoliopsida</taxon>
        <taxon>eudicotyledons</taxon>
        <taxon>Gunneridae</taxon>
        <taxon>Pentapetalae</taxon>
        <taxon>rosids</taxon>
        <taxon>malvids</taxon>
        <taxon>Brassicales</taxon>
        <taxon>Brassicaceae</taxon>
        <taxon>Camelineae</taxon>
        <taxon>Arabidopsis</taxon>
    </lineage>
</organism>
<gene>
    <name type="primary">BGAL9</name>
    <name type="ordered locus">At2g32810</name>
    <name type="ORF">F24L7.5</name>
</gene>
<name>BGAL9_ARATH</name>
<evidence type="ECO:0000255" key="1"/>
<evidence type="ECO:0000255" key="2">
    <source>
        <dbReference type="PROSITE-ProRule" id="PRU00260"/>
    </source>
</evidence>
<evidence type="ECO:0000269" key="3">
    <source>
    </source>
</evidence>
<evidence type="ECO:0000269" key="4">
    <source>
    </source>
</evidence>
<evidence type="ECO:0000305" key="5"/>
<keyword id="KW-0025">Alternative splicing</keyword>
<keyword id="KW-0052">Apoplast</keyword>
<keyword id="KW-0325">Glycoprotein</keyword>
<keyword id="KW-0326">Glycosidase</keyword>
<keyword id="KW-0378">Hydrolase</keyword>
<keyword id="KW-1185">Reference proteome</keyword>
<keyword id="KW-0964">Secreted</keyword>
<keyword id="KW-0732">Signal</keyword>
<reference key="1">
    <citation type="submission" date="1999-10" db="EMBL/GenBank/DDBJ databases">
        <title>The beta-galactosidases are encoding by a multigene family in Arabidopsis thaliana.</title>
        <authorList>
            <person name="Gy I."/>
            <person name="Kreis M."/>
            <person name="Lecharny A."/>
        </authorList>
    </citation>
    <scope>NUCLEOTIDE SEQUENCE [MRNA]</scope>
</reference>
<reference key="2">
    <citation type="journal article" date="1999" name="Nature">
        <title>Sequence and analysis of chromosome 2 of the plant Arabidopsis thaliana.</title>
        <authorList>
            <person name="Lin X."/>
            <person name="Kaul S."/>
            <person name="Rounsley S.D."/>
            <person name="Shea T.P."/>
            <person name="Benito M.-I."/>
            <person name="Town C.D."/>
            <person name="Fujii C.Y."/>
            <person name="Mason T.M."/>
            <person name="Bowman C.L."/>
            <person name="Barnstead M.E."/>
            <person name="Feldblyum T.V."/>
            <person name="Buell C.R."/>
            <person name="Ketchum K.A."/>
            <person name="Lee J.J."/>
            <person name="Ronning C.M."/>
            <person name="Koo H.L."/>
            <person name="Moffat K.S."/>
            <person name="Cronin L.A."/>
            <person name="Shen M."/>
            <person name="Pai G."/>
            <person name="Van Aken S."/>
            <person name="Umayam L."/>
            <person name="Tallon L.J."/>
            <person name="Gill J.E."/>
            <person name="Adams M.D."/>
            <person name="Carrera A.J."/>
            <person name="Creasy T.H."/>
            <person name="Goodman H.M."/>
            <person name="Somerville C.R."/>
            <person name="Copenhaver G.P."/>
            <person name="Preuss D."/>
            <person name="Nierman W.C."/>
            <person name="White O."/>
            <person name="Eisen J.A."/>
            <person name="Salzberg S.L."/>
            <person name="Fraser C.M."/>
            <person name="Venter J.C."/>
        </authorList>
    </citation>
    <scope>NUCLEOTIDE SEQUENCE [LARGE SCALE GENOMIC DNA]</scope>
    <source>
        <strain>cv. Columbia</strain>
    </source>
</reference>
<reference key="3">
    <citation type="journal article" date="2017" name="Plant J.">
        <title>Araport11: a complete reannotation of the Arabidopsis thaliana reference genome.</title>
        <authorList>
            <person name="Cheng C.Y."/>
            <person name="Krishnakumar V."/>
            <person name="Chan A.P."/>
            <person name="Thibaud-Nissen F."/>
            <person name="Schobel S."/>
            <person name="Town C.D."/>
        </authorList>
    </citation>
    <scope>GENOME REANNOTATION</scope>
    <source>
        <strain>cv. Columbia</strain>
    </source>
</reference>
<reference key="4">
    <citation type="journal article" date="2006" name="Plant Cell Physiol.">
        <title>Apoplastic glycosidases active against xyloglucan oligosaccharides of Arabidopsis thaliana.</title>
        <authorList>
            <person name="Iglesias N."/>
            <person name="Abelenda J.A."/>
            <person name="Rodino M."/>
            <person name="Sampedro J."/>
            <person name="Revilla G."/>
            <person name="Zarra I."/>
        </authorList>
    </citation>
    <scope>TISSUE SPECIFICITY</scope>
</reference>
<reference key="5">
    <citation type="journal article" date="2007" name="Phytochemistry">
        <title>Functional genomic analysis of Arabidopsis thaliana glycoside hydrolase family 35.</title>
        <authorList>
            <person name="Ahn Y.O."/>
            <person name="Zheng M."/>
            <person name="Bevan D.R."/>
            <person name="Esen A."/>
            <person name="Shiu S.-H."/>
            <person name="Benson J."/>
            <person name="Peng H.-P."/>
            <person name="Miller J.T."/>
            <person name="Cheng C.-L."/>
            <person name="Poulton J.E."/>
            <person name="Shih M.-C."/>
        </authorList>
    </citation>
    <scope>TISSUE SPECIFICITY</scope>
    <scope>GENE FAMILY</scope>
    <scope>NOMENCLATURE</scope>
</reference>
<sequence>MAESIRTFSLQWRILSLIIALLVYFPILSGSYFKPFNVSYDHRALIIAGKRRMLVSAGIHYPRATPEMWSDLIAKSKEGGADVVQTYVFWNGHEPVKGQYNFEGRYDLVKFVKLIGSSGLYLHLRIGPYVCAEWNFGGFPVWLRDIPGIEFRTDNEPFKKEMQKFVTKIVDLMREAKLFCWQGGPIIMLQIENEYGDVEKSYGQKGKDYVKWAASMALGLGAGVPWVMCKQTDAPENIIDACNGYYCDGFKPNSRTKPVLWTEDWDGWYTKWGGSLPHRPAEDLAFAVARFYQRGGSFQNYYMYFGGTNFGRTSGGPFYITSYDYDAPLDEYGLRSEPKWGHLKDLHAAIKLCEPALVAADAPQYRKLGSKQEAHIYHGDGETGGKVCAAFLANIDEHKSAHVKFNGQSYTLPPWSVSILPDCRHVAFNTAKVGAQTSVKTVESARPSLGSMSILQKVVRQDNVSYISKSWMALKEPIGIWGENNFTFQGLLEHLNVTKDRSDYLWHKTRISVSEDDISFWKKNGPNSTVSIDSMRDVLRVFVNKQLAGSIVGHWVKAVQPVRFIQGNNDLLLLTQTVGLQNYGAFLEKDGAGFRGKAKLTGFKNGDLDLSKSSWTYQVGLKGEADKIYTVEHNEKAEWSTLETDASPSIFMWYKTYFDPPAGTDPVVLNLESMGRGQAWVNGQHIGRYWNIISQKDGCDRTCDYRGAYNSDKCTTNCGKPTQTRYHVPRSWLKPSSNLLVLFEETGGNPFKISVKTVTAGILCGQVSESHYPPLRKWSTPDYINGTMSINSVAPEVHLHCEDGHVISSIEFASYGTPRGSCDGFSIGKCHASNSLSIVSEACKGRNSCFIEVSNTAFISDPCSGTLKTLAVMSRCSPSQNMSDLSF</sequence>
<proteinExistence type="evidence at transcript level"/>
<accession>Q9SCV3</accession>
<accession>O48836</accession>
<dbReference type="EC" id="3.2.1.23"/>
<dbReference type="EMBL" id="AJ270305">
    <property type="protein sequence ID" value="CAB64745.1"/>
    <property type="molecule type" value="mRNA"/>
</dbReference>
<dbReference type="EMBL" id="AC003974">
    <property type="protein sequence ID" value="AAC04500.2"/>
    <property type="molecule type" value="Genomic_DNA"/>
</dbReference>
<dbReference type="EMBL" id="CP002685">
    <property type="protein sequence ID" value="AEC08744.1"/>
    <property type="molecule type" value="Genomic_DNA"/>
</dbReference>
<dbReference type="PIR" id="T00787">
    <property type="entry name" value="T00787"/>
</dbReference>
<dbReference type="RefSeq" id="NP_565755.1">
    <molecule id="Q9SCV3-1"/>
    <property type="nucleotide sequence ID" value="NM_128841.5"/>
</dbReference>
<dbReference type="SMR" id="Q9SCV3"/>
<dbReference type="BioGRID" id="3189">
    <property type="interactions" value="1"/>
</dbReference>
<dbReference type="FunCoup" id="Q9SCV3">
    <property type="interactions" value="783"/>
</dbReference>
<dbReference type="STRING" id="3702.Q9SCV3"/>
<dbReference type="CAZy" id="GH35">
    <property type="family name" value="Glycoside Hydrolase Family 35"/>
</dbReference>
<dbReference type="GlyCosmos" id="Q9SCV3">
    <property type="glycosylation" value="7 sites, No reported glycans"/>
</dbReference>
<dbReference type="GlyGen" id="Q9SCV3">
    <property type="glycosylation" value="7 sites"/>
</dbReference>
<dbReference type="PaxDb" id="3702-AT2G32810.1"/>
<dbReference type="ProteomicsDB" id="240677">
    <molecule id="Q9SCV3-1"/>
</dbReference>
<dbReference type="EnsemblPlants" id="AT2G32810.1">
    <molecule id="Q9SCV3-1"/>
    <property type="protein sequence ID" value="AT2G32810.1"/>
    <property type="gene ID" value="AT2G32810"/>
</dbReference>
<dbReference type="GeneID" id="817842"/>
<dbReference type="Gramene" id="AT2G32810.1">
    <molecule id="Q9SCV3-1"/>
    <property type="protein sequence ID" value="AT2G32810.1"/>
    <property type="gene ID" value="AT2G32810"/>
</dbReference>
<dbReference type="KEGG" id="ath:AT2G32810"/>
<dbReference type="Araport" id="AT2G32810"/>
<dbReference type="TAIR" id="AT2G32810">
    <property type="gene designation" value="BGAL9"/>
</dbReference>
<dbReference type="eggNOG" id="KOG0496">
    <property type="taxonomic scope" value="Eukaryota"/>
</dbReference>
<dbReference type="HOGENOM" id="CLU_007853_4_1_1"/>
<dbReference type="InParanoid" id="Q9SCV3"/>
<dbReference type="OMA" id="KETIGTW"/>
<dbReference type="PhylomeDB" id="Q9SCV3"/>
<dbReference type="BioCyc" id="ARA:AT2G32810-MONOMER"/>
<dbReference type="PRO" id="PR:Q9SCV3"/>
<dbReference type="Proteomes" id="UP000006548">
    <property type="component" value="Chromosome 2"/>
</dbReference>
<dbReference type="ExpressionAtlas" id="Q9SCV3">
    <property type="expression patterns" value="baseline and differential"/>
</dbReference>
<dbReference type="GO" id="GO:0048046">
    <property type="term" value="C:apoplast"/>
    <property type="evidence" value="ECO:0007669"/>
    <property type="project" value="UniProtKB-SubCell"/>
</dbReference>
<dbReference type="GO" id="GO:0000325">
    <property type="term" value="C:plant-type vacuole"/>
    <property type="evidence" value="ECO:0007005"/>
    <property type="project" value="TAIR"/>
</dbReference>
<dbReference type="GO" id="GO:0005773">
    <property type="term" value="C:vacuole"/>
    <property type="evidence" value="ECO:0007005"/>
    <property type="project" value="TAIR"/>
</dbReference>
<dbReference type="GO" id="GO:0004565">
    <property type="term" value="F:beta-galactosidase activity"/>
    <property type="evidence" value="ECO:0007669"/>
    <property type="project" value="UniProtKB-EC"/>
</dbReference>
<dbReference type="GO" id="GO:0030246">
    <property type="term" value="F:carbohydrate binding"/>
    <property type="evidence" value="ECO:0007669"/>
    <property type="project" value="InterPro"/>
</dbReference>
<dbReference type="GO" id="GO:0005975">
    <property type="term" value="P:carbohydrate metabolic process"/>
    <property type="evidence" value="ECO:0007669"/>
    <property type="project" value="InterPro"/>
</dbReference>
<dbReference type="CDD" id="cd22842">
    <property type="entry name" value="Gal_Rha_Lectin_BGal"/>
    <property type="match status" value="1"/>
</dbReference>
<dbReference type="FunFam" id="2.60.120.260:FF:000076">
    <property type="entry name" value="Beta-galactosidase"/>
    <property type="match status" value="1"/>
</dbReference>
<dbReference type="FunFam" id="2.60.120.260:FF:000107">
    <property type="entry name" value="Beta-galactosidase"/>
    <property type="match status" value="1"/>
</dbReference>
<dbReference type="FunFam" id="2.60.120.260:FF:000142">
    <property type="entry name" value="Beta-galactosidase"/>
    <property type="match status" value="1"/>
</dbReference>
<dbReference type="FunFam" id="2.60.120.740:FF:000002">
    <property type="entry name" value="Beta-galactosidase"/>
    <property type="match status" value="1"/>
</dbReference>
<dbReference type="FunFam" id="3.20.20.80:FF:000006">
    <property type="entry name" value="Beta-galactosidase"/>
    <property type="match status" value="1"/>
</dbReference>
<dbReference type="Gene3D" id="2.60.120.740">
    <property type="match status" value="1"/>
</dbReference>
<dbReference type="Gene3D" id="2.60.120.260">
    <property type="entry name" value="Galactose-binding domain-like"/>
    <property type="match status" value="2"/>
</dbReference>
<dbReference type="Gene3D" id="3.20.20.80">
    <property type="entry name" value="Glycosidases"/>
    <property type="match status" value="1"/>
</dbReference>
<dbReference type="InterPro" id="IPR048913">
    <property type="entry name" value="BetaGal_gal-bd"/>
</dbReference>
<dbReference type="InterPro" id="IPR008979">
    <property type="entry name" value="Galactose-bd-like_sf"/>
</dbReference>
<dbReference type="InterPro" id="IPR041392">
    <property type="entry name" value="GHD"/>
</dbReference>
<dbReference type="InterPro" id="IPR031330">
    <property type="entry name" value="Gly_Hdrlase_35_cat"/>
</dbReference>
<dbReference type="InterPro" id="IPR019801">
    <property type="entry name" value="Glyco_hydro_35_CS"/>
</dbReference>
<dbReference type="InterPro" id="IPR001944">
    <property type="entry name" value="Glycoside_Hdrlase_35"/>
</dbReference>
<dbReference type="InterPro" id="IPR017853">
    <property type="entry name" value="Glycoside_hydrolase_SF"/>
</dbReference>
<dbReference type="InterPro" id="IPR000922">
    <property type="entry name" value="Lectin_gal-bd_dom"/>
</dbReference>
<dbReference type="InterPro" id="IPR043159">
    <property type="entry name" value="Lectin_gal-bd_sf"/>
</dbReference>
<dbReference type="PANTHER" id="PTHR23421">
    <property type="entry name" value="BETA-GALACTOSIDASE RELATED"/>
    <property type="match status" value="1"/>
</dbReference>
<dbReference type="Pfam" id="PF21467">
    <property type="entry name" value="BetaGal_gal-bd"/>
    <property type="match status" value="1"/>
</dbReference>
<dbReference type="Pfam" id="PF17834">
    <property type="entry name" value="GHD"/>
    <property type="match status" value="1"/>
</dbReference>
<dbReference type="Pfam" id="PF01301">
    <property type="entry name" value="Glyco_hydro_35"/>
    <property type="match status" value="1"/>
</dbReference>
<dbReference type="Pfam" id="PF02140">
    <property type="entry name" value="SUEL_Lectin"/>
    <property type="match status" value="1"/>
</dbReference>
<dbReference type="PRINTS" id="PR00742">
    <property type="entry name" value="GLHYDRLASE35"/>
</dbReference>
<dbReference type="SUPFAM" id="SSF51445">
    <property type="entry name" value="(Trans)glycosidases"/>
    <property type="match status" value="1"/>
</dbReference>
<dbReference type="SUPFAM" id="SSF49785">
    <property type="entry name" value="Galactose-binding domain-like"/>
    <property type="match status" value="2"/>
</dbReference>
<dbReference type="PROSITE" id="PS01182">
    <property type="entry name" value="GLYCOSYL_HYDROL_F35"/>
    <property type="match status" value="1"/>
</dbReference>
<dbReference type="PROSITE" id="PS50228">
    <property type="entry name" value="SUEL_LECTIN"/>
    <property type="match status" value="1"/>
</dbReference>
<protein>
    <recommendedName>
        <fullName>Beta-galactosidase 9</fullName>
        <shortName>Lactase 9</shortName>
        <ecNumber>3.2.1.23</ecNumber>
    </recommendedName>
</protein>